<feature type="chain" id="PRO_0000457842" description="Short chain dehydrogenase AOL_s00215g274">
    <location>
        <begin position="1"/>
        <end position="322"/>
    </location>
</feature>
<feature type="active site" description="Proton acceptor" evidence="1">
    <location>
        <position position="197"/>
    </location>
</feature>
<feature type="binding site" evidence="1">
    <location>
        <begin position="47"/>
        <end position="48"/>
    </location>
    <ligand>
        <name>NAD(+)</name>
        <dbReference type="ChEBI" id="CHEBI:57540"/>
    </ligand>
</feature>
<feature type="binding site" evidence="1">
    <location>
        <begin position="104"/>
        <end position="106"/>
    </location>
    <ligand>
        <name>NAD(+)</name>
        <dbReference type="ChEBI" id="CHEBI:57540"/>
    </ligand>
</feature>
<feature type="binding site" evidence="1">
    <location>
        <begin position="197"/>
        <end position="201"/>
    </location>
    <ligand>
        <name>NAD(+)</name>
        <dbReference type="ChEBI" id="CHEBI:57540"/>
    </ligand>
</feature>
<feature type="binding site" evidence="1">
    <location>
        <begin position="230"/>
        <end position="232"/>
    </location>
    <ligand>
        <name>NAD(+)</name>
        <dbReference type="ChEBI" id="CHEBI:57540"/>
    </ligand>
</feature>
<keyword id="KW-0520">NAD</keyword>
<keyword id="KW-0521">NADP</keyword>
<keyword id="KW-0560">Oxidoreductase</keyword>
<keyword id="KW-1185">Reference proteome</keyword>
<comment type="function">
    <text evidence="2 3 10">Short chain dehydrogenase; part of the gene cluster that mediates the biosynthesis of sesquiterpenyl epoxy-cyclohexenoids (SECs) such as anthrobotrisins and arthrosporols, metabolites that possess a novel hybrid carbon skeleton consisting of a polyketide-derived epoxycyclohexenol combined with a terpenoid-derived monocyclic sesquiterpenol substructure (PKS-PTS hybrid) (PubMed:28692300, PubMed:33823587). The SEC pathway plays an important role for fungal soil colonization via decreasing fungal nematode-capturing ability (PubMed:33823587). Within the pathway, the cytochrome P450 monooxygenase AOL_s00215g274 is involved in specific regional ketone reductions at C-4 of farnesyl epoxy-quinone (PubMed:28692300, PubMed:33823587). The pathway begins with the biosynthesis of 6-methylsalicylic acid (6-MSA), the first precursor of the polyketide-derived epoxycyclohexenol in arthrosporols, by the polyketide synthase (PKS) AOL_s00215g283 via condensation of 1 acetate and 3 malonate units. The 6-methylsalicylic acid decarboxylase AOL_s00215g281 then catalyzes the decarboxylation of 6-methylsalicylic acid to yield m-cresol. The cytochrome P450 monooxygenase AOL_s00215g282 further oxidizes m-cresol to yield toluquinol. With the assistance of the oxidoreductase AOL_s00215g277, the polyprenyl transferase AOL_s00215g276 catalyzes the farnesylation of toluquinol to produce farnesyl hydroquinone, the hybrid precursor for biosynthesis of SECs. Farnesyl hydroquinone undergoes epoxidation and then subsequent dehydrogenation to form farnesyl epoxy-quinone, the first and simplest SEC. The cytochrome P450 monooxygenase AOL_s00215g278 and the FAD-dependent monooxygenase AOL_s00215g279 might be involved in the oxygenation of the phenol moiety, most likely in the epoxy formation. The cytochrome P450 monooxygenases AOL_s00215g274 and AOL_s00215g280 are involved in specific regional ketone reductions at respectively C-4 and C-1 of farnesyl epoxy-quinone PubMed:33823587 (Probable).</text>
</comment>
<comment type="pathway">
    <text evidence="3">Secondary metabolite biosynthesis; terpenoid biosynthesis.</text>
</comment>
<comment type="induction">
    <text evidence="4 5">Expression is down-regulated by the cluster-specific transcription factor AOL_s00215g275 (PubMed:36547594). Expression is also down-regulated by the HOG1-MAPK pathway downstream transcription factor MSN2 (PubMed:38331317).</text>
</comment>
<comment type="disruption phenotype">
    <text evidence="2 3">Abolishes the production of arthrobotrisins A to D and arthrosporol A, and leads to the accumulation of 11 new sesquiterpenyl epoxy-cyclohexenoids (SECs) and derivatives with diverse oxidation patterns (PubMed:28692300, PubMed:33823587). Shows substantial reduction in conidiation (PubMed:33823587). Develops far more adhesive trapping devices and traps and increases the number of captured nematodes by the traps (PubMed:33823587). Shows significantly increased ammonia levels in fungal mycelia (PubMed:33823587).</text>
</comment>
<comment type="similarity">
    <text evidence="8">Belongs to the short-chain dehydrogenases/reductases (SDR) family.</text>
</comment>
<sequence length="322" mass="35058">MAPRIPSIPSSTDLSGQSALVTGSNTGIGFENARQFLQLKASPVYLAVRSVERGQEAKKLLLDDPEVKKKNPGAVVEIYQVDMASFDSVAAFAQKFSEVKKLNIAVLNAGVSFFKYIPTSDGYETVLQVNYLSNALLATHLLPLLKAGAAASGKPSHLAFVSSNMQHMTSLKKNTIKPNENIIDWFNNRANFGMDRYNVSKLLLTGFTNELASKIDSSQVVINSMCPGLVATNFDTNSPWYLKYLMKGVRSLMARTPSEGARALTLAAITGTEGNGKYYSDGKETPSAALLLTEDGKAFQKKLWDQTLERIQQLDPTSPPPI</sequence>
<evidence type="ECO:0000250" key="1">
    <source>
        <dbReference type="UniProtKB" id="Q92506"/>
    </source>
</evidence>
<evidence type="ECO:0000269" key="2">
    <source>
    </source>
</evidence>
<evidence type="ECO:0000269" key="3">
    <source>
    </source>
</evidence>
<evidence type="ECO:0000269" key="4">
    <source>
    </source>
</evidence>
<evidence type="ECO:0000269" key="5">
    <source>
    </source>
</evidence>
<evidence type="ECO:0000303" key="6">
    <source>
    </source>
</evidence>
<evidence type="ECO:0000303" key="7">
    <source>
    </source>
</evidence>
<evidence type="ECO:0000305" key="8"/>
<evidence type="ECO:0000305" key="9">
    <source>
    </source>
</evidence>
<evidence type="ECO:0000305" key="10">
    <source>
    </source>
</evidence>
<accession>G1XTZ5</accession>
<organism>
    <name type="scientific">Arthrobotrys oligospora (strain ATCC 24927 / CBS 115.81 / DSM 1491)</name>
    <name type="common">Nematode-trapping fungus</name>
    <name type="synonym">Didymozoophaga oligospora</name>
    <dbReference type="NCBI Taxonomy" id="756982"/>
    <lineage>
        <taxon>Eukaryota</taxon>
        <taxon>Fungi</taxon>
        <taxon>Dikarya</taxon>
        <taxon>Ascomycota</taxon>
        <taxon>Pezizomycotina</taxon>
        <taxon>Orbiliomycetes</taxon>
        <taxon>Orbiliales</taxon>
        <taxon>Orbiliaceae</taxon>
        <taxon>Orbilia</taxon>
        <taxon>Orbilia oligospora</taxon>
    </lineage>
</organism>
<dbReference type="EC" id="1.1.1.-" evidence="9"/>
<dbReference type="EMBL" id="ADOT01000316">
    <property type="protein sequence ID" value="EGX43538.1"/>
    <property type="molecule type" value="Genomic_DNA"/>
</dbReference>
<dbReference type="RefSeq" id="XP_011127778.1">
    <property type="nucleotide sequence ID" value="XM_011129476.1"/>
</dbReference>
<dbReference type="SMR" id="G1XTZ5"/>
<dbReference type="STRING" id="756982.G1XTZ5"/>
<dbReference type="GeneID" id="22898684"/>
<dbReference type="eggNOG" id="KOG1208">
    <property type="taxonomic scope" value="Eukaryota"/>
</dbReference>
<dbReference type="HOGENOM" id="CLU_010194_44_4_1"/>
<dbReference type="InParanoid" id="G1XTZ5"/>
<dbReference type="OMA" id="QVNCYTH"/>
<dbReference type="OrthoDB" id="1994855at4890"/>
<dbReference type="UniPathway" id="UPA00213"/>
<dbReference type="Proteomes" id="UP000008784">
    <property type="component" value="Unassembled WGS sequence"/>
</dbReference>
<dbReference type="GO" id="GO:0016491">
    <property type="term" value="F:oxidoreductase activity"/>
    <property type="evidence" value="ECO:0007669"/>
    <property type="project" value="UniProtKB-KW"/>
</dbReference>
<dbReference type="GO" id="GO:0016114">
    <property type="term" value="P:terpenoid biosynthetic process"/>
    <property type="evidence" value="ECO:0007669"/>
    <property type="project" value="UniProtKB-UniPathway"/>
</dbReference>
<dbReference type="Gene3D" id="3.40.50.720">
    <property type="entry name" value="NAD(P)-binding Rossmann-like Domain"/>
    <property type="match status" value="1"/>
</dbReference>
<dbReference type="InterPro" id="IPR036291">
    <property type="entry name" value="NAD(P)-bd_dom_sf"/>
</dbReference>
<dbReference type="InterPro" id="IPR002347">
    <property type="entry name" value="SDR_fam"/>
</dbReference>
<dbReference type="PANTHER" id="PTHR43157:SF31">
    <property type="entry name" value="PHOSPHATIDYLINOSITOL-GLYCAN BIOSYNTHESIS CLASS F PROTEIN"/>
    <property type="match status" value="1"/>
</dbReference>
<dbReference type="PANTHER" id="PTHR43157">
    <property type="entry name" value="PHOSPHATIDYLINOSITOL-GLYCAN BIOSYNTHESIS CLASS F PROTEIN-RELATED"/>
    <property type="match status" value="1"/>
</dbReference>
<dbReference type="Pfam" id="PF00106">
    <property type="entry name" value="adh_short"/>
    <property type="match status" value="1"/>
</dbReference>
<dbReference type="PRINTS" id="PR00081">
    <property type="entry name" value="GDHRDH"/>
</dbReference>
<dbReference type="SUPFAM" id="SSF51735">
    <property type="entry name" value="NAD(P)-binding Rossmann-fold domains"/>
    <property type="match status" value="1"/>
</dbReference>
<protein>
    <recommendedName>
        <fullName evidence="6">Short chain dehydrogenase AOL_s00215g274</fullName>
        <ecNumber evidence="9">1.1.1.-</ecNumber>
    </recommendedName>
    <alternativeName>
        <fullName evidence="7">Sesquiterpenyl epoxy-cyclohexenoids cluster protein AOL_s00215g274</fullName>
        <shortName evidence="7">SECs cluster protein AOL_s00215g274</shortName>
    </alternativeName>
</protein>
<name>AR274_ARTOA</name>
<gene>
    <name type="ORF">AOL_s00215g274</name>
</gene>
<proteinExistence type="evidence at transcript level"/>
<reference key="1">
    <citation type="journal article" date="2011" name="PLoS Pathog.">
        <title>Genomic and proteomic analyses of the fungus Arthrobotrys oligospora provide insights into nematode-trap formation.</title>
        <authorList>
            <person name="Yang J."/>
            <person name="Wang L."/>
            <person name="Ji X."/>
            <person name="Feng Y."/>
            <person name="Li X."/>
            <person name="Zou C."/>
            <person name="Xu J."/>
            <person name="Ren Y."/>
            <person name="Mi Q."/>
            <person name="Wu J."/>
            <person name="Liu S."/>
            <person name="Liu Y."/>
            <person name="Huang X."/>
            <person name="Wang H."/>
            <person name="Niu X."/>
            <person name="Li J."/>
            <person name="Liang L."/>
            <person name="Luo Y."/>
            <person name="Ji K."/>
            <person name="Zhou W."/>
            <person name="Yu Z."/>
            <person name="Li G."/>
            <person name="Liu Y."/>
            <person name="Li L."/>
            <person name="Qiao M."/>
            <person name="Feng L."/>
            <person name="Zhang K.-Q."/>
        </authorList>
    </citation>
    <scope>NUCLEOTIDE SEQUENCE [LARGE SCALE GENOMIC DNA]</scope>
    <source>
        <strain>ATCC 24927 / CBS 115.81 / DSM 1491</strain>
    </source>
</reference>
<reference key="2">
    <citation type="journal article" date="2017" name="Org. Lett.">
        <title>Selected mutations revealed intermediates and key precursors in the biosynthesis of polyketide-terpenoid hybrid sesquiterpenyl epoxy-cyclohexenoids.</title>
        <authorList>
            <person name="Teng L.L."/>
            <person name="Song T.Y."/>
            <person name="Xu Z.F."/>
            <person name="Liu X."/>
            <person name="Dai R."/>
            <person name="Chen Y.H."/>
            <person name="Li S.H."/>
            <person name="Zhang K.Q."/>
            <person name="Niu X.M."/>
        </authorList>
    </citation>
    <scope>FUNCTION</scope>
    <scope>DISRUPTION PHENOTYPE</scope>
</reference>
<reference key="3">
    <citation type="journal article" date="2021" name="J. Agric. Food Chem.">
        <title>Polyketide synthase-terpenoid synthase hybrid pathway regulation of trap formation through ammonia metabolism controls soil colonization of predominant nematode-trapping fungus.</title>
        <authorList>
            <person name="He Z.Q."/>
            <person name="Wang L.J."/>
            <person name="Wang Y.J."/>
            <person name="Chen Y.H."/>
            <person name="Wen Y."/>
            <person name="Zhang K.Q."/>
            <person name="Niu X.M."/>
        </authorList>
    </citation>
    <scope>FUNCTION</scope>
    <scope>DISRUPTION PHENOTYPE</scope>
    <scope>PATHWAY</scope>
</reference>
<reference key="4">
    <citation type="journal article" date="2022" name="J. Fungi">
        <title>The multifaceted gene 275 embedded in the PKS-PTS gene cluster was involved in the regulation of arthrobotrisin biosynthesis, TCA cycle, and septa formation in nematode-trapping fungus Arthrobotrys oligospora.</title>
        <authorList>
            <person name="Zhou J."/>
            <person name="Wu Q.F."/>
            <person name="Li S.H."/>
            <person name="Yan J.X."/>
            <person name="Wu L."/>
            <person name="Cheng Q.Y."/>
            <person name="He Z.Q."/>
            <person name="Yue X.T."/>
            <person name="Zhang K.Q."/>
            <person name="Zhang L.L."/>
            <person name="Niu X.M."/>
        </authorList>
    </citation>
    <scope>INDUCTION</scope>
</reference>
<reference key="5">
    <citation type="journal article" date="2025" name="J. Adv. Res.">
        <title>Identification of a transcription factor AoMsn2 of the Hog1 signaling pathway contributes to fungal growth, development and pathogenicity in Arthrobotrys oligospora.</title>
        <authorList>
            <person name="Liu Q."/>
            <person name="Jiang K."/>
            <person name="Duan S."/>
            <person name="Zhao N."/>
            <person name="Shen Y."/>
            <person name="Zhu L."/>
            <person name="Zhang K.Q."/>
            <person name="Yang J."/>
        </authorList>
    </citation>
    <scope>INDUCTION</scope>
</reference>